<evidence type="ECO:0000250" key="1">
    <source>
        <dbReference type="UniProtKB" id="Q9BVW5"/>
    </source>
</evidence>
<evidence type="ECO:0000256" key="2">
    <source>
        <dbReference type="SAM" id="MobiDB-lite"/>
    </source>
</evidence>
<evidence type="ECO:0000305" key="3"/>
<protein>
    <recommendedName>
        <fullName>TIMELESS-interacting protein</fullName>
    </recommendedName>
</protein>
<name>TIPIN_BOVIN</name>
<feature type="chain" id="PRO_0000305252" description="TIMELESS-interacting protein">
    <location>
        <begin position="1"/>
        <end position="290"/>
    </location>
</feature>
<feature type="region of interest" description="Disordered" evidence="2">
    <location>
        <begin position="1"/>
        <end position="59"/>
    </location>
</feature>
<feature type="region of interest" description="Interaction with TIMELESS" evidence="1">
    <location>
        <begin position="67"/>
        <end position="143"/>
    </location>
</feature>
<feature type="region of interest" description="Disordered" evidence="2">
    <location>
        <begin position="221"/>
        <end position="290"/>
    </location>
</feature>
<feature type="compositionally biased region" description="Polar residues" evidence="2">
    <location>
        <begin position="221"/>
        <end position="242"/>
    </location>
</feature>
<feature type="modified residue" description="Phosphoserine" evidence="1">
    <location>
        <position position="194"/>
    </location>
</feature>
<feature type="modified residue" description="Phosphoserine" evidence="1">
    <location>
        <position position="222"/>
    </location>
</feature>
<feature type="modified residue" description="Phosphothreonine" evidence="1">
    <location>
        <position position="233"/>
    </location>
</feature>
<feature type="modified residue" description="Phosphothreonine" evidence="1">
    <location>
        <position position="244"/>
    </location>
</feature>
<gene>
    <name type="primary">TIPIN</name>
</gene>
<sequence length="290" mass="32743">MLEPQENGLTDLPDYEHIEDETFPPFPPPASPGREDGEGAEPEEESGRGAPVPVPPKRTVKRNIPKLNAERLISERGLPALRHVFEKAKFKGKGHEAEDLKTLIRHMEHWAHRLFPKLQFEDFIDRVECLGNKKEVQTCLKRIRLDLPILHEDFVSNNDEVEENNGHDVTATELDHFLTNSYGSVEFASESSRSLTEEEQQRIERNKQLALERRQAKLLSNSQSLGNDLSVNTPSTQTSEAGSTGEEQKEEESNGFNKDLLDSPHNAGAASTVNEEEQLKVEETQLDQSF</sequence>
<dbReference type="EMBL" id="BC102519">
    <property type="protein sequence ID" value="AAI02520.1"/>
    <property type="molecule type" value="mRNA"/>
</dbReference>
<dbReference type="RefSeq" id="NP_001276920.1">
    <property type="nucleotide sequence ID" value="NM_001289991.1"/>
</dbReference>
<dbReference type="SMR" id="Q3ZCC4"/>
<dbReference type="FunCoup" id="Q3ZCC4">
    <property type="interactions" value="2184"/>
</dbReference>
<dbReference type="STRING" id="9913.ENSBTAP00000000482"/>
<dbReference type="PaxDb" id="9913-ENSBTAP00000000482"/>
<dbReference type="GeneID" id="506176"/>
<dbReference type="KEGG" id="bta:506176"/>
<dbReference type="CTD" id="54962"/>
<dbReference type="VEuPathDB" id="HostDB:ENSBTAG00000000372"/>
<dbReference type="eggNOG" id="KOG3004">
    <property type="taxonomic scope" value="Eukaryota"/>
</dbReference>
<dbReference type="HOGENOM" id="CLU_074595_0_0_1"/>
<dbReference type="InParanoid" id="Q3ZCC4"/>
<dbReference type="OrthoDB" id="437078at2759"/>
<dbReference type="TreeFam" id="TF313290"/>
<dbReference type="Proteomes" id="UP000009136">
    <property type="component" value="Chromosome 10"/>
</dbReference>
<dbReference type="Bgee" id="ENSBTAG00000000372">
    <property type="expression patterns" value="Expressed in oocyte and 105 other cell types or tissues"/>
</dbReference>
<dbReference type="GO" id="GO:0000785">
    <property type="term" value="C:chromatin"/>
    <property type="evidence" value="ECO:0000250"/>
    <property type="project" value="UniProtKB"/>
</dbReference>
<dbReference type="GO" id="GO:0005737">
    <property type="term" value="C:cytoplasm"/>
    <property type="evidence" value="ECO:0007669"/>
    <property type="project" value="UniProtKB-SubCell"/>
</dbReference>
<dbReference type="GO" id="GO:0005634">
    <property type="term" value="C:nucleus"/>
    <property type="evidence" value="ECO:0000250"/>
    <property type="project" value="UniProtKB"/>
</dbReference>
<dbReference type="GO" id="GO:0031298">
    <property type="term" value="C:replication fork protection complex"/>
    <property type="evidence" value="ECO:0000318"/>
    <property type="project" value="GO_Central"/>
</dbReference>
<dbReference type="GO" id="GO:0003677">
    <property type="term" value="F:DNA binding"/>
    <property type="evidence" value="ECO:0000318"/>
    <property type="project" value="GO_Central"/>
</dbReference>
<dbReference type="GO" id="GO:0044770">
    <property type="term" value="P:cell cycle phase transition"/>
    <property type="evidence" value="ECO:0000250"/>
    <property type="project" value="UniProtKB"/>
</dbReference>
<dbReference type="GO" id="GO:0051301">
    <property type="term" value="P:cell division"/>
    <property type="evidence" value="ECO:0007669"/>
    <property type="project" value="UniProtKB-KW"/>
</dbReference>
<dbReference type="GO" id="GO:0000076">
    <property type="term" value="P:DNA replication checkpoint signaling"/>
    <property type="evidence" value="ECO:0000250"/>
    <property type="project" value="UniProtKB"/>
</dbReference>
<dbReference type="GO" id="GO:0031573">
    <property type="term" value="P:mitotic intra-S DNA damage checkpoint signaling"/>
    <property type="evidence" value="ECO:0000250"/>
    <property type="project" value="UniProtKB"/>
</dbReference>
<dbReference type="GO" id="GO:0008284">
    <property type="term" value="P:positive regulation of cell population proliferation"/>
    <property type="evidence" value="ECO:0000250"/>
    <property type="project" value="UniProtKB"/>
</dbReference>
<dbReference type="GO" id="GO:0043111">
    <property type="term" value="P:replication fork arrest"/>
    <property type="evidence" value="ECO:0000318"/>
    <property type="project" value="GO_Central"/>
</dbReference>
<dbReference type="GO" id="GO:0031297">
    <property type="term" value="P:replication fork processing"/>
    <property type="evidence" value="ECO:0007669"/>
    <property type="project" value="InterPro"/>
</dbReference>
<dbReference type="InterPro" id="IPR012923">
    <property type="entry name" value="Csm3"/>
</dbReference>
<dbReference type="InterPro" id="IPR040038">
    <property type="entry name" value="TIPIN/Csm3/Swi3"/>
</dbReference>
<dbReference type="PANTHER" id="PTHR13220">
    <property type="entry name" value="TIMELESS INTERACTING-RELATED"/>
    <property type="match status" value="1"/>
</dbReference>
<dbReference type="PANTHER" id="PTHR13220:SF11">
    <property type="entry name" value="TIMELESS-INTERACTING PROTEIN"/>
    <property type="match status" value="1"/>
</dbReference>
<dbReference type="Pfam" id="PF07962">
    <property type="entry name" value="Swi3"/>
    <property type="match status" value="1"/>
</dbReference>
<proteinExistence type="evidence at transcript level"/>
<reference key="1">
    <citation type="submission" date="2005-08" db="EMBL/GenBank/DDBJ databases">
        <authorList>
            <consortium name="NIH - Mammalian Gene Collection (MGC) project"/>
        </authorList>
    </citation>
    <scope>NUCLEOTIDE SEQUENCE [LARGE SCALE MRNA]</scope>
    <source>
        <strain>Crossbred X Angus</strain>
        <tissue>Ileum</tissue>
    </source>
</reference>
<accession>Q3ZCC4</accession>
<keyword id="KW-0131">Cell cycle</keyword>
<keyword id="KW-0132">Cell division</keyword>
<keyword id="KW-0963">Cytoplasm</keyword>
<keyword id="KW-0227">DNA damage</keyword>
<keyword id="KW-0498">Mitosis</keyword>
<keyword id="KW-0539">Nucleus</keyword>
<keyword id="KW-0597">Phosphoprotein</keyword>
<keyword id="KW-1185">Reference proteome</keyword>
<comment type="function">
    <text evidence="1">Plays an important role in the control of DNA replication and the maintenance of replication fork stability. Important for cell survival after DNA damage or replication stress. May be specifically required for the ATR-CHEK1 pathway in the replication checkpoint induced by hydroxyurea or ultraviolet light. Forms a complex with TIMELESS and this complex regulates DNA replication processes under both normal and stress conditions, stabilizes replication forks and influences both CHEK1 phosphorylation and the intra-S phase checkpoint in response to genotoxic stress.</text>
</comment>
<comment type="subunit">
    <text evidence="1">Interacts with TIMELESS (via N-terminus), which impairs TIMELESS self-association. Associates with the MCM2-7 complex. Interacts with RPA2, PRDX2.</text>
</comment>
<comment type="subcellular location">
    <subcellularLocation>
        <location evidence="1">Cytoplasm</location>
    </subcellularLocation>
    <subcellularLocation>
        <location evidence="1">Nucleus</location>
    </subcellularLocation>
</comment>
<comment type="similarity">
    <text evidence="3">Belongs to the CSM3 family.</text>
</comment>
<organism>
    <name type="scientific">Bos taurus</name>
    <name type="common">Bovine</name>
    <dbReference type="NCBI Taxonomy" id="9913"/>
    <lineage>
        <taxon>Eukaryota</taxon>
        <taxon>Metazoa</taxon>
        <taxon>Chordata</taxon>
        <taxon>Craniata</taxon>
        <taxon>Vertebrata</taxon>
        <taxon>Euteleostomi</taxon>
        <taxon>Mammalia</taxon>
        <taxon>Eutheria</taxon>
        <taxon>Laurasiatheria</taxon>
        <taxon>Artiodactyla</taxon>
        <taxon>Ruminantia</taxon>
        <taxon>Pecora</taxon>
        <taxon>Bovidae</taxon>
        <taxon>Bovinae</taxon>
        <taxon>Bos</taxon>
    </lineage>
</organism>